<accession>B5Z3Y6</accession>
<name>HEMH_ECO5E</name>
<proteinExistence type="inferred from homology"/>
<dbReference type="EC" id="4.98.1.1" evidence="1"/>
<dbReference type="EMBL" id="CP001164">
    <property type="protein sequence ID" value="ACI39181.1"/>
    <property type="molecule type" value="Genomic_DNA"/>
</dbReference>
<dbReference type="RefSeq" id="WP_001250105.1">
    <property type="nucleotide sequence ID" value="NC_011353.1"/>
</dbReference>
<dbReference type="SMR" id="B5Z3Y6"/>
<dbReference type="GeneID" id="75170493"/>
<dbReference type="KEGG" id="ecf:ECH74115_0568"/>
<dbReference type="HOGENOM" id="CLU_018884_0_0_6"/>
<dbReference type="UniPathway" id="UPA00252">
    <property type="reaction ID" value="UER00325"/>
</dbReference>
<dbReference type="GO" id="GO:0005737">
    <property type="term" value="C:cytoplasm"/>
    <property type="evidence" value="ECO:0007669"/>
    <property type="project" value="UniProtKB-SubCell"/>
</dbReference>
<dbReference type="GO" id="GO:0004325">
    <property type="term" value="F:ferrochelatase activity"/>
    <property type="evidence" value="ECO:0007669"/>
    <property type="project" value="UniProtKB-UniRule"/>
</dbReference>
<dbReference type="GO" id="GO:0046872">
    <property type="term" value="F:metal ion binding"/>
    <property type="evidence" value="ECO:0007669"/>
    <property type="project" value="UniProtKB-KW"/>
</dbReference>
<dbReference type="GO" id="GO:0006783">
    <property type="term" value="P:heme biosynthetic process"/>
    <property type="evidence" value="ECO:0007669"/>
    <property type="project" value="UniProtKB-UniRule"/>
</dbReference>
<dbReference type="CDD" id="cd00419">
    <property type="entry name" value="Ferrochelatase_C"/>
    <property type="match status" value="1"/>
</dbReference>
<dbReference type="CDD" id="cd03411">
    <property type="entry name" value="Ferrochelatase_N"/>
    <property type="match status" value="1"/>
</dbReference>
<dbReference type="FunFam" id="3.40.50.1400:FF:000004">
    <property type="entry name" value="Ferrochelatase"/>
    <property type="match status" value="1"/>
</dbReference>
<dbReference type="Gene3D" id="3.40.50.1400">
    <property type="match status" value="2"/>
</dbReference>
<dbReference type="HAMAP" id="MF_00323">
    <property type="entry name" value="Ferrochelatase"/>
    <property type="match status" value="1"/>
</dbReference>
<dbReference type="InterPro" id="IPR001015">
    <property type="entry name" value="Ferrochelatase"/>
</dbReference>
<dbReference type="InterPro" id="IPR019772">
    <property type="entry name" value="Ferrochelatase_AS"/>
</dbReference>
<dbReference type="InterPro" id="IPR033644">
    <property type="entry name" value="Ferrochelatase_C"/>
</dbReference>
<dbReference type="InterPro" id="IPR033659">
    <property type="entry name" value="Ferrochelatase_N"/>
</dbReference>
<dbReference type="NCBIfam" id="TIGR00109">
    <property type="entry name" value="hemH"/>
    <property type="match status" value="1"/>
</dbReference>
<dbReference type="PANTHER" id="PTHR11108">
    <property type="entry name" value="FERROCHELATASE"/>
    <property type="match status" value="1"/>
</dbReference>
<dbReference type="PANTHER" id="PTHR11108:SF1">
    <property type="entry name" value="FERROCHELATASE, MITOCHONDRIAL"/>
    <property type="match status" value="1"/>
</dbReference>
<dbReference type="Pfam" id="PF00762">
    <property type="entry name" value="Ferrochelatase"/>
    <property type="match status" value="1"/>
</dbReference>
<dbReference type="SUPFAM" id="SSF53800">
    <property type="entry name" value="Chelatase"/>
    <property type="match status" value="1"/>
</dbReference>
<dbReference type="PROSITE" id="PS00534">
    <property type="entry name" value="FERROCHELATASE"/>
    <property type="match status" value="1"/>
</dbReference>
<keyword id="KW-0963">Cytoplasm</keyword>
<keyword id="KW-0350">Heme biosynthesis</keyword>
<keyword id="KW-0408">Iron</keyword>
<keyword id="KW-0456">Lyase</keyword>
<keyword id="KW-0479">Metal-binding</keyword>
<keyword id="KW-0627">Porphyrin biosynthesis</keyword>
<protein>
    <recommendedName>
        <fullName evidence="1">Ferrochelatase</fullName>
        <ecNumber evidence="1">4.98.1.1</ecNumber>
    </recommendedName>
    <alternativeName>
        <fullName evidence="1">Heme synthase</fullName>
    </alternativeName>
    <alternativeName>
        <fullName evidence="1">Protoheme ferro-lyase</fullName>
    </alternativeName>
</protein>
<organism>
    <name type="scientific">Escherichia coli O157:H7 (strain EC4115 / EHEC)</name>
    <dbReference type="NCBI Taxonomy" id="444450"/>
    <lineage>
        <taxon>Bacteria</taxon>
        <taxon>Pseudomonadati</taxon>
        <taxon>Pseudomonadota</taxon>
        <taxon>Gammaproteobacteria</taxon>
        <taxon>Enterobacterales</taxon>
        <taxon>Enterobacteriaceae</taxon>
        <taxon>Escherichia</taxon>
    </lineage>
</organism>
<sequence>MRQTKTGILLANLGTPDAPTPEAVKRYLKQFLSDRRVVDTSRLLWWPLLRGVILPLRSPRVAKLYASVWMEGGSPLMVYSRQQQQALAQRLPETPVALGMSYGSPSLESAVDELLAEHVDHIVVLPLYPQFSCSTVGAVWDELARILARKRSIPGISFIRDYADNHDYINALANSVRASFAKHGEPDLLLLSYHGIPQRYADEGDDYPQRCRTTTRELASALGMAPEKVMMTFQSRFGREPWLMPYTDETLKMLGEKGVGHIQVMCPGFAADCLETLEEIAEQNREVFLGAGGKKYEYIPALNATPEHIEMMANLVAAYR</sequence>
<feature type="chain" id="PRO_1000116042" description="Ferrochelatase">
    <location>
        <begin position="1"/>
        <end position="320"/>
    </location>
</feature>
<feature type="binding site" evidence="1">
    <location>
        <position position="194"/>
    </location>
    <ligand>
        <name>Fe cation</name>
        <dbReference type="ChEBI" id="CHEBI:24875"/>
    </ligand>
</feature>
<feature type="binding site" evidence="1">
    <location>
        <position position="275"/>
    </location>
    <ligand>
        <name>Fe cation</name>
        <dbReference type="ChEBI" id="CHEBI:24875"/>
    </ligand>
</feature>
<gene>
    <name evidence="1" type="primary">hemH</name>
    <name type="ordered locus">ECH74115_0568</name>
</gene>
<reference key="1">
    <citation type="journal article" date="2011" name="Proc. Natl. Acad. Sci. U.S.A.">
        <title>Genomic anatomy of Escherichia coli O157:H7 outbreaks.</title>
        <authorList>
            <person name="Eppinger M."/>
            <person name="Mammel M.K."/>
            <person name="Leclerc J.E."/>
            <person name="Ravel J."/>
            <person name="Cebula T.A."/>
        </authorList>
    </citation>
    <scope>NUCLEOTIDE SEQUENCE [LARGE SCALE GENOMIC DNA]</scope>
    <source>
        <strain>EC4115 / EHEC</strain>
    </source>
</reference>
<evidence type="ECO:0000255" key="1">
    <source>
        <dbReference type="HAMAP-Rule" id="MF_00323"/>
    </source>
</evidence>
<comment type="function">
    <text evidence="1">Catalyzes the ferrous insertion into protoporphyrin IX.</text>
</comment>
<comment type="catalytic activity">
    <reaction evidence="1">
        <text>heme b + 2 H(+) = protoporphyrin IX + Fe(2+)</text>
        <dbReference type="Rhea" id="RHEA:22584"/>
        <dbReference type="ChEBI" id="CHEBI:15378"/>
        <dbReference type="ChEBI" id="CHEBI:29033"/>
        <dbReference type="ChEBI" id="CHEBI:57306"/>
        <dbReference type="ChEBI" id="CHEBI:60344"/>
        <dbReference type="EC" id="4.98.1.1"/>
    </reaction>
</comment>
<comment type="pathway">
    <text evidence="1">Porphyrin-containing compound metabolism; protoheme biosynthesis; protoheme from protoporphyrin-IX: step 1/1.</text>
</comment>
<comment type="subunit">
    <text evidence="1">Monomer.</text>
</comment>
<comment type="subcellular location">
    <subcellularLocation>
        <location evidence="1">Cytoplasm</location>
    </subcellularLocation>
</comment>
<comment type="similarity">
    <text evidence="1">Belongs to the ferrochelatase family.</text>
</comment>